<comment type="function">
    <text evidence="1">Promotes mitochondrial protein synthesis. May act as a fidelity factor of the translation reaction, by catalyzing a one-codon backward translocation of tRNAs on improperly translocated ribosomes. Binds to mitochondrial ribosomes in a GTP-dependent manner.</text>
</comment>
<comment type="catalytic activity">
    <reaction evidence="1">
        <text>GTP + H2O = GDP + phosphate + H(+)</text>
        <dbReference type="Rhea" id="RHEA:19669"/>
        <dbReference type="ChEBI" id="CHEBI:15377"/>
        <dbReference type="ChEBI" id="CHEBI:15378"/>
        <dbReference type="ChEBI" id="CHEBI:37565"/>
        <dbReference type="ChEBI" id="CHEBI:43474"/>
        <dbReference type="ChEBI" id="CHEBI:58189"/>
    </reaction>
</comment>
<comment type="subcellular location">
    <subcellularLocation>
        <location evidence="1">Mitochondrion inner membrane</location>
        <topology evidence="1">Peripheral membrane protein</topology>
        <orientation evidence="1">Matrix side</orientation>
    </subcellularLocation>
</comment>
<comment type="similarity">
    <text evidence="2">Belongs to the TRAFAC class translation factor GTPase superfamily. Classic translation factor GTPase family. LepA subfamily.</text>
</comment>
<reference key="1">
    <citation type="journal article" date="2009" name="Nature">
        <title>Evolution of pathogenicity and sexual reproduction in eight Candida genomes.</title>
        <authorList>
            <person name="Butler G."/>
            <person name="Rasmussen M.D."/>
            <person name="Lin M.F."/>
            <person name="Santos M.A.S."/>
            <person name="Sakthikumar S."/>
            <person name="Munro C.A."/>
            <person name="Rheinbay E."/>
            <person name="Grabherr M."/>
            <person name="Forche A."/>
            <person name="Reedy J.L."/>
            <person name="Agrafioti I."/>
            <person name="Arnaud M.B."/>
            <person name="Bates S."/>
            <person name="Brown A.J.P."/>
            <person name="Brunke S."/>
            <person name="Costanzo M.C."/>
            <person name="Fitzpatrick D.A."/>
            <person name="de Groot P.W.J."/>
            <person name="Harris D."/>
            <person name="Hoyer L.L."/>
            <person name="Hube B."/>
            <person name="Klis F.M."/>
            <person name="Kodira C."/>
            <person name="Lennard N."/>
            <person name="Logue M.E."/>
            <person name="Martin R."/>
            <person name="Neiman A.M."/>
            <person name="Nikolaou E."/>
            <person name="Quail M.A."/>
            <person name="Quinn J."/>
            <person name="Santos M.C."/>
            <person name="Schmitzberger F.F."/>
            <person name="Sherlock G."/>
            <person name="Shah P."/>
            <person name="Silverstein K.A.T."/>
            <person name="Skrzypek M.S."/>
            <person name="Soll D."/>
            <person name="Staggs R."/>
            <person name="Stansfield I."/>
            <person name="Stumpf M.P.H."/>
            <person name="Sudbery P.E."/>
            <person name="Srikantha T."/>
            <person name="Zeng Q."/>
            <person name="Berman J."/>
            <person name="Berriman M."/>
            <person name="Heitman J."/>
            <person name="Gow N.A.R."/>
            <person name="Lorenz M.C."/>
            <person name="Birren B.W."/>
            <person name="Kellis M."/>
            <person name="Cuomo C.A."/>
        </authorList>
    </citation>
    <scope>NUCLEOTIDE SEQUENCE [LARGE SCALE GENOMIC DNA]</scope>
    <source>
        <strain>ATCC 6260 / CBS 566 / DSM 6381 / JCM 1539 / NBRC 10279 / NRRL Y-324</strain>
    </source>
</reference>
<name>GUF1_PICGU</name>
<proteinExistence type="inferred from homology"/>
<sequence>MYIHSSRTVLARYGSRTPLLRPSVLGRYSTSPAATIEARKIALNRDNYIKSVYDRIAKIPPENYRNFSIVAHVDHGKSTLSDRLLELTGVIQPGDKNQVLDRLDVERERGITVKAQTCTMIFNDPRNGQDYLLHLVDTPGHVDFRAEVSRSYASCGGALLLVDATQGVQAQTVANFYLAYSMGLKLIPIINKIDLDAADIPRAMDQVESTFELDRENCLQVSAKTGLNVKSILPAIVDHIPAPDCDINSPLKALLVDSWHDPYVGVVMLLYVKEGTIKKGMKLLSAHTEGRYEVKEVGIMYPDKVPMESIRAGQVGYIVPGMKDPSQAKIGDTFFQYGKHEGLEALPGFEEPKPMVFVGAFPAEGSEFKVMDDHIANLVLNDRSVTLEKETSNALGLGWRLGFLGSLHASVFQERLENEYGAKIILTAPTVPYKIVYKDGTDKIVTNPDEFPGSDLRNQNVDKLMEPYVNAIMTIPDEYIGAVMSLCENNRGIQKELEYLTNGQVLMRYEIPLAQLVEDFFGKLKGCTKGYASLDYEDAGYKKSDIVKMELCVNGEPQDALTQVMHRSQVQARGKEYVVRFKEYLRFQLFEVAIQAKVNNKVVARETIKAKRKDVTQKLHAADISRRKKLLSRQKEGKKQMKASGRVHINHEAYQAFLRRTI</sequence>
<accession>A5DG70</accession>
<keyword id="KW-0342">GTP-binding</keyword>
<keyword id="KW-0378">Hydrolase</keyword>
<keyword id="KW-0472">Membrane</keyword>
<keyword id="KW-0496">Mitochondrion</keyword>
<keyword id="KW-0999">Mitochondrion inner membrane</keyword>
<keyword id="KW-0547">Nucleotide-binding</keyword>
<keyword id="KW-0648">Protein biosynthesis</keyword>
<keyword id="KW-1185">Reference proteome</keyword>
<keyword id="KW-0809">Transit peptide</keyword>
<dbReference type="EC" id="3.6.5.-"/>
<dbReference type="EMBL" id="CH408156">
    <property type="protein sequence ID" value="EDK38173.2"/>
    <property type="molecule type" value="Genomic_DNA"/>
</dbReference>
<dbReference type="RefSeq" id="XP_001486600.1">
    <property type="nucleotide sequence ID" value="XM_001486550.1"/>
</dbReference>
<dbReference type="SMR" id="A5DG70"/>
<dbReference type="FunCoup" id="A5DG70">
    <property type="interactions" value="726"/>
</dbReference>
<dbReference type="STRING" id="294746.A5DG70"/>
<dbReference type="GeneID" id="5128094"/>
<dbReference type="KEGG" id="pgu:PGUG_02271"/>
<dbReference type="VEuPathDB" id="FungiDB:PGUG_02271"/>
<dbReference type="eggNOG" id="KOG0462">
    <property type="taxonomic scope" value="Eukaryota"/>
</dbReference>
<dbReference type="HOGENOM" id="CLU_009995_3_1_1"/>
<dbReference type="InParanoid" id="A5DG70"/>
<dbReference type="OMA" id="QVKCDEN"/>
<dbReference type="OrthoDB" id="1074at2759"/>
<dbReference type="Proteomes" id="UP000001997">
    <property type="component" value="Unassembled WGS sequence"/>
</dbReference>
<dbReference type="GO" id="GO:0005743">
    <property type="term" value="C:mitochondrial inner membrane"/>
    <property type="evidence" value="ECO:0007669"/>
    <property type="project" value="UniProtKB-SubCell"/>
</dbReference>
<dbReference type="GO" id="GO:0005759">
    <property type="term" value="C:mitochondrial matrix"/>
    <property type="evidence" value="ECO:0007669"/>
    <property type="project" value="UniProtKB-UniRule"/>
</dbReference>
<dbReference type="GO" id="GO:0005525">
    <property type="term" value="F:GTP binding"/>
    <property type="evidence" value="ECO:0007669"/>
    <property type="project" value="UniProtKB-UniRule"/>
</dbReference>
<dbReference type="GO" id="GO:0003924">
    <property type="term" value="F:GTPase activity"/>
    <property type="evidence" value="ECO:0007669"/>
    <property type="project" value="UniProtKB-UniRule"/>
</dbReference>
<dbReference type="GO" id="GO:0097177">
    <property type="term" value="F:mitochondrial ribosome binding"/>
    <property type="evidence" value="ECO:0007669"/>
    <property type="project" value="TreeGrafter"/>
</dbReference>
<dbReference type="GO" id="GO:0045727">
    <property type="term" value="P:positive regulation of translation"/>
    <property type="evidence" value="ECO:0007669"/>
    <property type="project" value="UniProtKB-UniRule"/>
</dbReference>
<dbReference type="GO" id="GO:0006412">
    <property type="term" value="P:translation"/>
    <property type="evidence" value="ECO:0007669"/>
    <property type="project" value="UniProtKB-KW"/>
</dbReference>
<dbReference type="CDD" id="cd03699">
    <property type="entry name" value="EF4_II"/>
    <property type="match status" value="1"/>
</dbReference>
<dbReference type="CDD" id="cd16260">
    <property type="entry name" value="EF4_III"/>
    <property type="match status" value="1"/>
</dbReference>
<dbReference type="CDD" id="cd01890">
    <property type="entry name" value="LepA"/>
    <property type="match status" value="1"/>
</dbReference>
<dbReference type="CDD" id="cd03709">
    <property type="entry name" value="lepA_C"/>
    <property type="match status" value="1"/>
</dbReference>
<dbReference type="FunFam" id="3.40.50.300:FF:000078">
    <property type="entry name" value="Elongation factor 4"/>
    <property type="match status" value="1"/>
</dbReference>
<dbReference type="FunFam" id="2.40.30.10:FF:000015">
    <property type="entry name" value="Translation factor GUF1, mitochondrial"/>
    <property type="match status" value="1"/>
</dbReference>
<dbReference type="FunFam" id="3.30.70.240:FF:000007">
    <property type="entry name" value="Translation factor GUF1, mitochondrial"/>
    <property type="match status" value="1"/>
</dbReference>
<dbReference type="FunFam" id="3.30.70.2570:FF:000001">
    <property type="entry name" value="Translation factor GUF1, mitochondrial"/>
    <property type="match status" value="1"/>
</dbReference>
<dbReference type="FunFam" id="3.30.70.870:FF:000004">
    <property type="entry name" value="Translation factor GUF1, mitochondrial"/>
    <property type="match status" value="1"/>
</dbReference>
<dbReference type="Gene3D" id="3.30.70.240">
    <property type="match status" value="1"/>
</dbReference>
<dbReference type="Gene3D" id="3.30.70.2570">
    <property type="entry name" value="Elongation factor 4, C-terminal domain"/>
    <property type="match status" value="1"/>
</dbReference>
<dbReference type="Gene3D" id="3.30.70.870">
    <property type="entry name" value="Elongation Factor G (Translational Gtpase), domain 3"/>
    <property type="match status" value="1"/>
</dbReference>
<dbReference type="Gene3D" id="3.40.50.300">
    <property type="entry name" value="P-loop containing nucleotide triphosphate hydrolases"/>
    <property type="match status" value="1"/>
</dbReference>
<dbReference type="Gene3D" id="2.40.30.10">
    <property type="entry name" value="Translation factors"/>
    <property type="match status" value="1"/>
</dbReference>
<dbReference type="HAMAP" id="MF_00071">
    <property type="entry name" value="LepA"/>
    <property type="match status" value="1"/>
</dbReference>
<dbReference type="InterPro" id="IPR006297">
    <property type="entry name" value="EF-4"/>
</dbReference>
<dbReference type="InterPro" id="IPR035647">
    <property type="entry name" value="EFG_III/V"/>
</dbReference>
<dbReference type="InterPro" id="IPR000640">
    <property type="entry name" value="EFG_V-like"/>
</dbReference>
<dbReference type="InterPro" id="IPR004161">
    <property type="entry name" value="EFTu-like_2"/>
</dbReference>
<dbReference type="InterPro" id="IPR038363">
    <property type="entry name" value="LepA_C_sf"/>
</dbReference>
<dbReference type="InterPro" id="IPR013842">
    <property type="entry name" value="LepA_CTD"/>
</dbReference>
<dbReference type="InterPro" id="IPR035654">
    <property type="entry name" value="LepA_IV"/>
</dbReference>
<dbReference type="InterPro" id="IPR027417">
    <property type="entry name" value="P-loop_NTPase"/>
</dbReference>
<dbReference type="InterPro" id="IPR005225">
    <property type="entry name" value="Small_GTP-bd"/>
</dbReference>
<dbReference type="InterPro" id="IPR000795">
    <property type="entry name" value="T_Tr_GTP-bd_dom"/>
</dbReference>
<dbReference type="InterPro" id="IPR009000">
    <property type="entry name" value="Transl_B-barrel_sf"/>
</dbReference>
<dbReference type="NCBIfam" id="TIGR01393">
    <property type="entry name" value="lepA"/>
    <property type="match status" value="1"/>
</dbReference>
<dbReference type="NCBIfam" id="TIGR00231">
    <property type="entry name" value="small_GTP"/>
    <property type="match status" value="1"/>
</dbReference>
<dbReference type="PANTHER" id="PTHR43512:SF7">
    <property type="entry name" value="TRANSLATION FACTOR GUF1, MITOCHONDRIAL"/>
    <property type="match status" value="1"/>
</dbReference>
<dbReference type="PANTHER" id="PTHR43512">
    <property type="entry name" value="TRANSLATION FACTOR GUF1-RELATED"/>
    <property type="match status" value="1"/>
</dbReference>
<dbReference type="Pfam" id="PF00679">
    <property type="entry name" value="EFG_C"/>
    <property type="match status" value="1"/>
</dbReference>
<dbReference type="Pfam" id="PF00009">
    <property type="entry name" value="GTP_EFTU"/>
    <property type="match status" value="1"/>
</dbReference>
<dbReference type="Pfam" id="PF03144">
    <property type="entry name" value="GTP_EFTU_D2"/>
    <property type="match status" value="1"/>
</dbReference>
<dbReference type="Pfam" id="PF06421">
    <property type="entry name" value="LepA_C"/>
    <property type="match status" value="1"/>
</dbReference>
<dbReference type="PRINTS" id="PR00315">
    <property type="entry name" value="ELONGATNFCT"/>
</dbReference>
<dbReference type="SUPFAM" id="SSF54980">
    <property type="entry name" value="EF-G C-terminal domain-like"/>
    <property type="match status" value="2"/>
</dbReference>
<dbReference type="SUPFAM" id="SSF52540">
    <property type="entry name" value="P-loop containing nucleoside triphosphate hydrolases"/>
    <property type="match status" value="1"/>
</dbReference>
<dbReference type="SUPFAM" id="SSF50447">
    <property type="entry name" value="Translation proteins"/>
    <property type="match status" value="1"/>
</dbReference>
<dbReference type="PROSITE" id="PS00301">
    <property type="entry name" value="G_TR_1"/>
    <property type="match status" value="1"/>
</dbReference>
<dbReference type="PROSITE" id="PS51722">
    <property type="entry name" value="G_TR_2"/>
    <property type="match status" value="1"/>
</dbReference>
<protein>
    <recommendedName>
        <fullName evidence="1">Translation factor GUF1, mitochondrial</fullName>
        <ecNumber>3.6.5.-</ecNumber>
    </recommendedName>
    <alternativeName>
        <fullName evidence="1">Elongation factor 4 homolog</fullName>
        <shortName evidence="1">EF-4</shortName>
    </alternativeName>
    <alternativeName>
        <fullName evidence="1">GTPase GUF1</fullName>
    </alternativeName>
    <alternativeName>
        <fullName evidence="1">Ribosomal back-translocase</fullName>
    </alternativeName>
</protein>
<organism>
    <name type="scientific">Meyerozyma guilliermondii (strain ATCC 6260 / CBS 566 / DSM 6381 / JCM 1539 / NBRC 10279 / NRRL Y-324)</name>
    <name type="common">Yeast</name>
    <name type="synonym">Candida guilliermondii</name>
    <dbReference type="NCBI Taxonomy" id="294746"/>
    <lineage>
        <taxon>Eukaryota</taxon>
        <taxon>Fungi</taxon>
        <taxon>Dikarya</taxon>
        <taxon>Ascomycota</taxon>
        <taxon>Saccharomycotina</taxon>
        <taxon>Pichiomycetes</taxon>
        <taxon>Debaryomycetaceae</taxon>
        <taxon>Meyerozyma</taxon>
    </lineage>
</organism>
<feature type="transit peptide" description="Mitochondrion" evidence="1">
    <location>
        <begin position="1"/>
        <end position="28"/>
    </location>
</feature>
<feature type="chain" id="PRO_0000402900" description="Translation factor GUF1, mitochondrial">
    <location>
        <begin position="29"/>
        <end position="662"/>
    </location>
</feature>
<feature type="domain" description="tr-type G">
    <location>
        <begin position="62"/>
        <end position="244"/>
    </location>
</feature>
<feature type="binding site" evidence="1">
    <location>
        <begin position="71"/>
        <end position="78"/>
    </location>
    <ligand>
        <name>GTP</name>
        <dbReference type="ChEBI" id="CHEBI:37565"/>
    </ligand>
</feature>
<feature type="binding site" evidence="1">
    <location>
        <begin position="137"/>
        <end position="141"/>
    </location>
    <ligand>
        <name>GTP</name>
        <dbReference type="ChEBI" id="CHEBI:37565"/>
    </ligand>
</feature>
<feature type="binding site" evidence="1">
    <location>
        <begin position="191"/>
        <end position="194"/>
    </location>
    <ligand>
        <name>GTP</name>
        <dbReference type="ChEBI" id="CHEBI:37565"/>
    </ligand>
</feature>
<evidence type="ECO:0000255" key="1">
    <source>
        <dbReference type="HAMAP-Rule" id="MF_03137"/>
    </source>
</evidence>
<evidence type="ECO:0000305" key="2"/>
<gene>
    <name evidence="1" type="primary">GUF1</name>
    <name type="ORF">PGUG_02271</name>
</gene>